<organism>
    <name type="scientific">Arabidopsis thaliana</name>
    <name type="common">Mouse-ear cress</name>
    <dbReference type="NCBI Taxonomy" id="3702"/>
    <lineage>
        <taxon>Eukaryota</taxon>
        <taxon>Viridiplantae</taxon>
        <taxon>Streptophyta</taxon>
        <taxon>Embryophyta</taxon>
        <taxon>Tracheophyta</taxon>
        <taxon>Spermatophyta</taxon>
        <taxon>Magnoliopsida</taxon>
        <taxon>eudicotyledons</taxon>
        <taxon>Gunneridae</taxon>
        <taxon>Pentapetalae</taxon>
        <taxon>rosids</taxon>
        <taxon>malvids</taxon>
        <taxon>Brassicales</taxon>
        <taxon>Brassicaceae</taxon>
        <taxon>Camelineae</taxon>
        <taxon>Arabidopsis</taxon>
    </lineage>
</organism>
<reference key="1">
    <citation type="journal article" date="1998" name="Nature">
        <title>Analysis of 1.9 Mb of contiguous sequence from chromosome 4 of Arabidopsis thaliana.</title>
        <authorList>
            <person name="Bevan M."/>
            <person name="Bancroft I."/>
            <person name="Bent E."/>
            <person name="Love K."/>
            <person name="Goodman H.M."/>
            <person name="Dean C."/>
            <person name="Bergkamp R."/>
            <person name="Dirkse W."/>
            <person name="van Staveren M."/>
            <person name="Stiekema W."/>
            <person name="Drost L."/>
            <person name="Ridley P."/>
            <person name="Hudson S.-A."/>
            <person name="Patel K."/>
            <person name="Murphy G."/>
            <person name="Piffanelli P."/>
            <person name="Wedler H."/>
            <person name="Wedler E."/>
            <person name="Wambutt R."/>
            <person name="Weitzenegger T."/>
            <person name="Pohl T."/>
            <person name="Terryn N."/>
            <person name="Gielen J."/>
            <person name="Villarroel R."/>
            <person name="De Clercq R."/>
            <person name="van Montagu M."/>
            <person name="Lecharny A."/>
            <person name="Aubourg S."/>
            <person name="Gy I."/>
            <person name="Kreis M."/>
            <person name="Lao N."/>
            <person name="Kavanagh T."/>
            <person name="Hempel S."/>
            <person name="Kotter P."/>
            <person name="Entian K.-D."/>
            <person name="Rieger M."/>
            <person name="Schaefer M."/>
            <person name="Funk B."/>
            <person name="Mueller-Auer S."/>
            <person name="Silvey M."/>
            <person name="James R."/>
            <person name="Monfort A."/>
            <person name="Pons A."/>
            <person name="Puigdomenech P."/>
            <person name="Douka A."/>
            <person name="Voukelatou E."/>
            <person name="Milioni D."/>
            <person name="Hatzopoulos P."/>
            <person name="Piravandi E."/>
            <person name="Obermaier B."/>
            <person name="Hilbert H."/>
            <person name="Duesterhoeft A."/>
            <person name="Moores T."/>
            <person name="Jones J.D.G."/>
            <person name="Eneva T."/>
            <person name="Palme K."/>
            <person name="Benes V."/>
            <person name="Rechmann S."/>
            <person name="Ansorge W."/>
            <person name="Cooke R."/>
            <person name="Berger C."/>
            <person name="Delseny M."/>
            <person name="Voet M."/>
            <person name="Volckaert G."/>
            <person name="Mewes H.-W."/>
            <person name="Klosterman S."/>
            <person name="Schueller C."/>
            <person name="Chalwatzis N."/>
        </authorList>
    </citation>
    <scope>NUCLEOTIDE SEQUENCE [LARGE SCALE GENOMIC DNA]</scope>
    <source>
        <strain>cv. Columbia</strain>
    </source>
</reference>
<reference key="2">
    <citation type="journal article" date="1999" name="Nature">
        <title>Sequence and analysis of chromosome 4 of the plant Arabidopsis thaliana.</title>
        <authorList>
            <person name="Mayer K.F.X."/>
            <person name="Schueller C."/>
            <person name="Wambutt R."/>
            <person name="Murphy G."/>
            <person name="Volckaert G."/>
            <person name="Pohl T."/>
            <person name="Duesterhoeft A."/>
            <person name="Stiekema W."/>
            <person name="Entian K.-D."/>
            <person name="Terryn N."/>
            <person name="Harris B."/>
            <person name="Ansorge W."/>
            <person name="Brandt P."/>
            <person name="Grivell L.A."/>
            <person name="Rieger M."/>
            <person name="Weichselgartner M."/>
            <person name="de Simone V."/>
            <person name="Obermaier B."/>
            <person name="Mache R."/>
            <person name="Mueller M."/>
            <person name="Kreis M."/>
            <person name="Delseny M."/>
            <person name="Puigdomenech P."/>
            <person name="Watson M."/>
            <person name="Schmidtheini T."/>
            <person name="Reichert B."/>
            <person name="Portetelle D."/>
            <person name="Perez-Alonso M."/>
            <person name="Boutry M."/>
            <person name="Bancroft I."/>
            <person name="Vos P."/>
            <person name="Hoheisel J."/>
            <person name="Zimmermann W."/>
            <person name="Wedler H."/>
            <person name="Ridley P."/>
            <person name="Langham S.-A."/>
            <person name="McCullagh B."/>
            <person name="Bilham L."/>
            <person name="Robben J."/>
            <person name="van der Schueren J."/>
            <person name="Grymonprez B."/>
            <person name="Chuang Y.-J."/>
            <person name="Vandenbussche F."/>
            <person name="Braeken M."/>
            <person name="Weltjens I."/>
            <person name="Voet M."/>
            <person name="Bastiaens I."/>
            <person name="Aert R."/>
            <person name="Defoor E."/>
            <person name="Weitzenegger T."/>
            <person name="Bothe G."/>
            <person name="Ramsperger U."/>
            <person name="Hilbert H."/>
            <person name="Braun M."/>
            <person name="Holzer E."/>
            <person name="Brandt A."/>
            <person name="Peters S."/>
            <person name="van Staveren M."/>
            <person name="Dirkse W."/>
            <person name="Mooijman P."/>
            <person name="Klein Lankhorst R."/>
            <person name="Rose M."/>
            <person name="Hauf J."/>
            <person name="Koetter P."/>
            <person name="Berneiser S."/>
            <person name="Hempel S."/>
            <person name="Feldpausch M."/>
            <person name="Lamberth S."/>
            <person name="Van den Daele H."/>
            <person name="De Keyser A."/>
            <person name="Buysshaert C."/>
            <person name="Gielen J."/>
            <person name="Villarroel R."/>
            <person name="De Clercq R."/>
            <person name="van Montagu M."/>
            <person name="Rogers J."/>
            <person name="Cronin A."/>
            <person name="Quail M.A."/>
            <person name="Bray-Allen S."/>
            <person name="Clark L."/>
            <person name="Doggett J."/>
            <person name="Hall S."/>
            <person name="Kay M."/>
            <person name="Lennard N."/>
            <person name="McLay K."/>
            <person name="Mayes R."/>
            <person name="Pettett A."/>
            <person name="Rajandream M.A."/>
            <person name="Lyne M."/>
            <person name="Benes V."/>
            <person name="Rechmann S."/>
            <person name="Borkova D."/>
            <person name="Bloecker H."/>
            <person name="Scharfe M."/>
            <person name="Grimm M."/>
            <person name="Loehnert T.-H."/>
            <person name="Dose S."/>
            <person name="de Haan M."/>
            <person name="Maarse A.C."/>
            <person name="Schaefer M."/>
            <person name="Mueller-Auer S."/>
            <person name="Gabel C."/>
            <person name="Fuchs M."/>
            <person name="Fartmann B."/>
            <person name="Granderath K."/>
            <person name="Dauner D."/>
            <person name="Herzl A."/>
            <person name="Neumann S."/>
            <person name="Argiriou A."/>
            <person name="Vitale D."/>
            <person name="Liguori R."/>
            <person name="Piravandi E."/>
            <person name="Massenet O."/>
            <person name="Quigley F."/>
            <person name="Clabauld G."/>
            <person name="Muendlein A."/>
            <person name="Felber R."/>
            <person name="Schnabl S."/>
            <person name="Hiller R."/>
            <person name="Schmidt W."/>
            <person name="Lecharny A."/>
            <person name="Aubourg S."/>
            <person name="Chefdor F."/>
            <person name="Cooke R."/>
            <person name="Berger C."/>
            <person name="Monfort A."/>
            <person name="Casacuberta E."/>
            <person name="Gibbons T."/>
            <person name="Weber N."/>
            <person name="Vandenbol M."/>
            <person name="Bargues M."/>
            <person name="Terol J."/>
            <person name="Torres A."/>
            <person name="Perez-Perez A."/>
            <person name="Purnelle B."/>
            <person name="Bent E."/>
            <person name="Johnson S."/>
            <person name="Tacon D."/>
            <person name="Jesse T."/>
            <person name="Heijnen L."/>
            <person name="Schwarz S."/>
            <person name="Scholler P."/>
            <person name="Heber S."/>
            <person name="Francs P."/>
            <person name="Bielke C."/>
            <person name="Frishman D."/>
            <person name="Haase D."/>
            <person name="Lemcke K."/>
            <person name="Mewes H.-W."/>
            <person name="Stocker S."/>
            <person name="Zaccaria P."/>
            <person name="Bevan M."/>
            <person name="Wilson R.K."/>
            <person name="de la Bastide M."/>
            <person name="Habermann K."/>
            <person name="Parnell L."/>
            <person name="Dedhia N."/>
            <person name="Gnoj L."/>
            <person name="Schutz K."/>
            <person name="Huang E."/>
            <person name="Spiegel L."/>
            <person name="Sekhon M."/>
            <person name="Murray J."/>
            <person name="Sheet P."/>
            <person name="Cordes M."/>
            <person name="Abu-Threideh J."/>
            <person name="Stoneking T."/>
            <person name="Kalicki J."/>
            <person name="Graves T."/>
            <person name="Harmon G."/>
            <person name="Edwards J."/>
            <person name="Latreille P."/>
            <person name="Courtney L."/>
            <person name="Cloud J."/>
            <person name="Abbott A."/>
            <person name="Scott K."/>
            <person name="Johnson D."/>
            <person name="Minx P."/>
            <person name="Bentley D."/>
            <person name="Fulton B."/>
            <person name="Miller N."/>
            <person name="Greco T."/>
            <person name="Kemp K."/>
            <person name="Kramer J."/>
            <person name="Fulton L."/>
            <person name="Mardis E."/>
            <person name="Dante M."/>
            <person name="Pepin K."/>
            <person name="Hillier L.W."/>
            <person name="Nelson J."/>
            <person name="Spieth J."/>
            <person name="Ryan E."/>
            <person name="Andrews S."/>
            <person name="Geisel C."/>
            <person name="Layman D."/>
            <person name="Du H."/>
            <person name="Ali J."/>
            <person name="Berghoff A."/>
            <person name="Jones K."/>
            <person name="Drone K."/>
            <person name="Cotton M."/>
            <person name="Joshu C."/>
            <person name="Antonoiu B."/>
            <person name="Zidanic M."/>
            <person name="Strong C."/>
            <person name="Sun H."/>
            <person name="Lamar B."/>
            <person name="Yordan C."/>
            <person name="Ma P."/>
            <person name="Zhong J."/>
            <person name="Preston R."/>
            <person name="Vil D."/>
            <person name="Shekher M."/>
            <person name="Matero A."/>
            <person name="Shah R."/>
            <person name="Swaby I.K."/>
            <person name="O'Shaughnessy A."/>
            <person name="Rodriguez M."/>
            <person name="Hoffman J."/>
            <person name="Till S."/>
            <person name="Granat S."/>
            <person name="Shohdy N."/>
            <person name="Hasegawa A."/>
            <person name="Hameed A."/>
            <person name="Lodhi M."/>
            <person name="Johnson A."/>
            <person name="Chen E."/>
            <person name="Marra M.A."/>
            <person name="Martienssen R."/>
            <person name="McCombie W.R."/>
        </authorList>
    </citation>
    <scope>NUCLEOTIDE SEQUENCE [LARGE SCALE GENOMIC DNA]</scope>
    <source>
        <strain>cv. Columbia</strain>
    </source>
</reference>
<reference key="3">
    <citation type="journal article" date="2017" name="Plant J.">
        <title>Araport11: a complete reannotation of the Arabidopsis thaliana reference genome.</title>
        <authorList>
            <person name="Cheng C.Y."/>
            <person name="Krishnakumar V."/>
            <person name="Chan A.P."/>
            <person name="Thibaud-Nissen F."/>
            <person name="Schobel S."/>
            <person name="Town C.D."/>
        </authorList>
    </citation>
    <scope>GENOME REANNOTATION</scope>
    <source>
        <strain>cv. Columbia</strain>
    </source>
</reference>
<reference key="4">
    <citation type="journal article" date="2003" name="Science">
        <title>Empirical analysis of transcriptional activity in the Arabidopsis genome.</title>
        <authorList>
            <person name="Yamada K."/>
            <person name="Lim J."/>
            <person name="Dale J.M."/>
            <person name="Chen H."/>
            <person name="Shinn P."/>
            <person name="Palm C.J."/>
            <person name="Southwick A.M."/>
            <person name="Wu H.C."/>
            <person name="Kim C.J."/>
            <person name="Nguyen M."/>
            <person name="Pham P.K."/>
            <person name="Cheuk R.F."/>
            <person name="Karlin-Newmann G."/>
            <person name="Liu S.X."/>
            <person name="Lam B."/>
            <person name="Sakano H."/>
            <person name="Wu T."/>
            <person name="Yu G."/>
            <person name="Miranda M."/>
            <person name="Quach H.L."/>
            <person name="Tripp M."/>
            <person name="Chang C.H."/>
            <person name="Lee J.M."/>
            <person name="Toriumi M.J."/>
            <person name="Chan M.M."/>
            <person name="Tang C.C."/>
            <person name="Onodera C.S."/>
            <person name="Deng J.M."/>
            <person name="Akiyama K."/>
            <person name="Ansari Y."/>
            <person name="Arakawa T."/>
            <person name="Banh J."/>
            <person name="Banno F."/>
            <person name="Bowser L."/>
            <person name="Brooks S.Y."/>
            <person name="Carninci P."/>
            <person name="Chao Q."/>
            <person name="Choy N."/>
            <person name="Enju A."/>
            <person name="Goldsmith A.D."/>
            <person name="Gurjal M."/>
            <person name="Hansen N.F."/>
            <person name="Hayashizaki Y."/>
            <person name="Johnson-Hopson C."/>
            <person name="Hsuan V.W."/>
            <person name="Iida K."/>
            <person name="Karnes M."/>
            <person name="Khan S."/>
            <person name="Koesema E."/>
            <person name="Ishida J."/>
            <person name="Jiang P.X."/>
            <person name="Jones T."/>
            <person name="Kawai J."/>
            <person name="Kamiya A."/>
            <person name="Meyers C."/>
            <person name="Nakajima M."/>
            <person name="Narusaka M."/>
            <person name="Seki M."/>
            <person name="Sakurai T."/>
            <person name="Satou M."/>
            <person name="Tamse R."/>
            <person name="Vaysberg M."/>
            <person name="Wallender E.K."/>
            <person name="Wong C."/>
            <person name="Yamamura Y."/>
            <person name="Yuan S."/>
            <person name="Shinozaki K."/>
            <person name="Davis R.W."/>
            <person name="Theologis A."/>
            <person name="Ecker J.R."/>
        </authorList>
    </citation>
    <scope>NUCLEOTIDE SEQUENCE [LARGE SCALE MRNA]</scope>
    <source>
        <strain>cv. Columbia</strain>
    </source>
</reference>
<reference key="5">
    <citation type="journal article" date="2010" name="BMC Genomics">
        <title>Genome-wide cloning and sequence analysis of leucine-rich repeat receptor-like protein kinase genes in Arabidopsis thaliana.</title>
        <authorList>
            <person name="Gou X."/>
            <person name="He K."/>
            <person name="Yang H."/>
            <person name="Yuan T."/>
            <person name="Lin H."/>
            <person name="Clouse S.D."/>
            <person name="Li J."/>
        </authorList>
    </citation>
    <scope>NUCLEOTIDE SEQUENCE [LARGE SCALE MRNA]</scope>
    <source>
        <strain>cv. Columbia</strain>
    </source>
</reference>
<reference key="6">
    <citation type="journal article" date="2009" name="DNA Res.">
        <title>Analysis of multiple occurrences of alternative splicing events in Arabidopsis thaliana using novel sequenced full-length cDNAs.</title>
        <authorList>
            <person name="Iida K."/>
            <person name="Fukami-Kobayashi K."/>
            <person name="Toyoda A."/>
            <person name="Sakaki Y."/>
            <person name="Kobayashi M."/>
            <person name="Seki M."/>
            <person name="Shinozaki K."/>
        </authorList>
    </citation>
    <scope>NUCLEOTIDE SEQUENCE [LARGE SCALE MRNA] OF 71-768</scope>
    <source>
        <tissue>Root</tissue>
    </source>
</reference>
<proteinExistence type="evidence at protein level"/>
<comment type="catalytic activity">
    <reaction>
        <text>L-seryl-[protein] + ATP = O-phospho-L-seryl-[protein] + ADP + H(+)</text>
        <dbReference type="Rhea" id="RHEA:17989"/>
        <dbReference type="Rhea" id="RHEA-COMP:9863"/>
        <dbReference type="Rhea" id="RHEA-COMP:11604"/>
        <dbReference type="ChEBI" id="CHEBI:15378"/>
        <dbReference type="ChEBI" id="CHEBI:29999"/>
        <dbReference type="ChEBI" id="CHEBI:30616"/>
        <dbReference type="ChEBI" id="CHEBI:83421"/>
        <dbReference type="ChEBI" id="CHEBI:456216"/>
        <dbReference type="EC" id="2.7.11.1"/>
    </reaction>
</comment>
<comment type="catalytic activity">
    <reaction>
        <text>L-threonyl-[protein] + ATP = O-phospho-L-threonyl-[protein] + ADP + H(+)</text>
        <dbReference type="Rhea" id="RHEA:46608"/>
        <dbReference type="Rhea" id="RHEA-COMP:11060"/>
        <dbReference type="Rhea" id="RHEA-COMP:11605"/>
        <dbReference type="ChEBI" id="CHEBI:15378"/>
        <dbReference type="ChEBI" id="CHEBI:30013"/>
        <dbReference type="ChEBI" id="CHEBI:30616"/>
        <dbReference type="ChEBI" id="CHEBI:61977"/>
        <dbReference type="ChEBI" id="CHEBI:456216"/>
        <dbReference type="EC" id="2.7.11.1"/>
    </reaction>
</comment>
<comment type="interaction">
    <interactant intactId="EBI-16955335">
        <id>C0LGS3</id>
    </interactant>
    <interactant intactId="EBI-20651541">
        <id>C0LGJ9</id>
        <label>At2g02780</label>
    </interactant>
    <organismsDiffer>false</organismsDiffer>
    <experiments>2</experiments>
</comment>
<comment type="interaction">
    <interactant intactId="EBI-16955335">
        <id>C0LGS3</id>
    </interactant>
    <interactant intactId="EBI-16946048">
        <id>C0LGL4</id>
        <label>At2g28960</label>
    </interactant>
    <organismsDiffer>false</organismsDiffer>
    <experiments>2</experiments>
</comment>
<comment type="interaction">
    <interactant intactId="EBI-16955335">
        <id>C0LGS3</id>
    </interactant>
    <interactant intactId="EBI-16887698">
        <id>O81069</id>
        <label>At2g28990</label>
    </interactant>
    <organismsDiffer>false</organismsDiffer>
    <experiments>2</experiments>
</comment>
<comment type="interaction">
    <interactant intactId="EBI-16955335">
        <id>C0LGS3</id>
    </interactant>
    <interactant intactId="EBI-17121875">
        <id>C0LGQ7</id>
        <label>At4g20450</label>
    </interactant>
    <organismsDiffer>false</organismsDiffer>
    <experiments>2</experiments>
</comment>
<comment type="interaction">
    <interactant intactId="EBI-16955335">
        <id>C0LGS3</id>
    </interactant>
    <interactant intactId="EBI-20657062">
        <id>Q9FL63</id>
        <label>At5g24100</label>
    </interactant>
    <organismsDiffer>false</organismsDiffer>
    <experiments>3</experiments>
</comment>
<comment type="interaction">
    <interactant intactId="EBI-16955335">
        <id>C0LGS3</id>
    </interactant>
    <interactant intactId="EBI-20653513">
        <id>Q9FN93</id>
        <label>At5g59680</label>
    </interactant>
    <organismsDiffer>false</organismsDiffer>
    <experiments>2</experiments>
</comment>
<comment type="interaction">
    <interactant intactId="EBI-16955335">
        <id>C0LGS3</id>
    </interactant>
    <interactant intactId="EBI-16934827">
        <id>Q8W4S5</id>
        <label>At5g63710</label>
    </interactant>
    <organismsDiffer>false</organismsDiffer>
    <experiments>3</experiments>
</comment>
<comment type="subcellular location">
    <subcellularLocation>
        <location evidence="6">Membrane</location>
        <topology evidence="6">Single-pass type I membrane protein</topology>
    </subcellularLocation>
</comment>
<comment type="similarity">
    <text evidence="4">Belongs to the protein kinase superfamily. Ser/Thr protein kinase family.</text>
</comment>
<comment type="sequence caution" evidence="6">
    <conflict type="erroneous initiation">
        <sequence resource="EMBL-CDS" id="CAB16774"/>
    </conflict>
</comment>
<comment type="sequence caution" evidence="6">
    <conflict type="erroneous initiation">
        <sequence resource="EMBL-CDS" id="CAB80391"/>
    </conflict>
</comment>
<evidence type="ECO:0000250" key="1">
    <source>
        <dbReference type="UniProtKB" id="Q94AG2"/>
    </source>
</evidence>
<evidence type="ECO:0000250" key="2">
    <source>
        <dbReference type="UniProtKB" id="Q94F62"/>
    </source>
</evidence>
<evidence type="ECO:0000255" key="3"/>
<evidence type="ECO:0000255" key="4">
    <source>
        <dbReference type="PROSITE-ProRule" id="PRU00159"/>
    </source>
</evidence>
<evidence type="ECO:0000256" key="5">
    <source>
        <dbReference type="SAM" id="MobiDB-lite"/>
    </source>
</evidence>
<evidence type="ECO:0000305" key="6"/>
<protein>
    <recommendedName>
        <fullName>Probable LRR receptor-like serine/threonine-protein kinase At4g37250</fullName>
        <ecNumber>2.7.11.1</ecNumber>
    </recommendedName>
</protein>
<accession>C0LGS3</accession>
<accession>B9DHS8</accession>
<accession>O23161</accession>
<accession>Q8VZC5</accession>
<gene>
    <name type="ordered locus">At4g37250</name>
    <name type="ORF">AP22.22</name>
    <name type="ORF">C7A10.110</name>
</gene>
<sequence>MRMELISVIFFFFCSVLSSSALNSDGLVLMKFKSSVLVDPLSLLQTWNYKHESPCSWRGISCNNDSKVLTLSLPNSQLLGSIPSDLGSLLTLQSLDLSNNSFNGPLPVSFFNARELRFLDLSSNMISGEIPSAIGDLHNLLTLNLSDNALAGKLPTNLASLRNLTVVSLENNYFSGEIPGGWRVVEFLDLSSNLINGSLPPDFGGYSLQYLNVSFNQISGEIPPEIGVNFPRNVTVDLSFNNLTGPIPDSPVFLNQESNFFSGNPGLCGEPTRNPCLIPSSPSIVSEADVPTSTPAIAAIPNTIGSNPVTDPNSQQTDPNPRTGLRPGVIIGIVVGDIAGIGILAVIFLYIYRCKKNKIVDNNNNDKQRTETDTITLSTFSSSSSSPEESRRFRKWSCLRKDPETTPSEEEDEDDEDEESGYNANQRSGDNKLVTVDGEKEMEIETLLKASAYILGATGSSIMYKAVLEDGRVFAVRRLGENGLSQRRFKDFEPHIRAIGKLVHPNLVRLCGFYWGTDEKLVIYDFVPNGSLVNPRYRKGGGSSSPYHLPWETRLKIAKGIARGLAYLHEKKHVHGNLKPSNILLGHDMEPKIGDFGLERLLTGETSYIRAGGSSRIFSSKRYTTSSREFSSIGPTPSPSPSSVGAMSPYCAPESFRSLKPSPKWDVYGFGVILLELLTGKIVSVEEIVLGNGLTVEDGHRAVRMADVAIRGELDGKQEFLLDCFKLGYSCASPVPQKRPTMKESLAVLERFHPNSSVIKSSSFHYGH</sequence>
<name>Y4372_ARATH</name>
<feature type="signal peptide" evidence="3">
    <location>
        <begin position="1"/>
        <end position="21"/>
    </location>
</feature>
<feature type="chain" id="PRO_0000387558" description="Probable LRR receptor-like serine/threonine-protein kinase At4g37250">
    <location>
        <begin position="22"/>
        <end position="768"/>
    </location>
</feature>
<feature type="topological domain" description="Extracellular" evidence="3">
    <location>
        <begin position="22"/>
        <end position="328"/>
    </location>
</feature>
<feature type="transmembrane region" description="Helical" evidence="3">
    <location>
        <begin position="329"/>
        <end position="349"/>
    </location>
</feature>
<feature type="topological domain" description="Cytoplasmic" evidence="3">
    <location>
        <begin position="350"/>
        <end position="768"/>
    </location>
</feature>
<feature type="repeat" description="LRR 1">
    <location>
        <begin position="67"/>
        <end position="90"/>
    </location>
</feature>
<feature type="repeat" description="LRR 2">
    <location>
        <begin position="91"/>
        <end position="112"/>
    </location>
</feature>
<feature type="repeat" description="LRR 3">
    <location>
        <begin position="115"/>
        <end position="137"/>
    </location>
</feature>
<feature type="repeat" description="LRR 4">
    <location>
        <begin position="139"/>
        <end position="162"/>
    </location>
</feature>
<feature type="repeat" description="LRR 5">
    <location>
        <begin position="163"/>
        <end position="183"/>
    </location>
</feature>
<feature type="repeat" description="LRR 6">
    <location>
        <begin position="184"/>
        <end position="206"/>
    </location>
</feature>
<feature type="repeat" description="LRR 7">
    <location>
        <begin position="207"/>
        <end position="229"/>
    </location>
</feature>
<feature type="repeat" description="LRR 8">
    <location>
        <begin position="232"/>
        <end position="254"/>
    </location>
</feature>
<feature type="domain" description="Protein kinase" evidence="4">
    <location>
        <begin position="449"/>
        <end position="756"/>
    </location>
</feature>
<feature type="region of interest" description="Disordered" evidence="5">
    <location>
        <begin position="301"/>
        <end position="324"/>
    </location>
</feature>
<feature type="region of interest" description="Disordered" evidence="5">
    <location>
        <begin position="361"/>
        <end position="432"/>
    </location>
</feature>
<feature type="compositionally biased region" description="Polar residues" evidence="5">
    <location>
        <begin position="303"/>
        <end position="320"/>
    </location>
</feature>
<feature type="compositionally biased region" description="Low complexity" evidence="5">
    <location>
        <begin position="378"/>
        <end position="387"/>
    </location>
</feature>
<feature type="compositionally biased region" description="Acidic residues" evidence="5">
    <location>
        <begin position="407"/>
        <end position="420"/>
    </location>
</feature>
<feature type="modified residue" description="Phosphoserine" evidence="2">
    <location>
        <position position="451"/>
    </location>
</feature>
<feature type="modified residue" description="Phosphoserine" evidence="1">
    <location>
        <position position="531"/>
    </location>
</feature>
<feature type="modified residue" description="Phosphothreonine" evidence="1">
    <location>
        <position position="553"/>
    </location>
</feature>
<feature type="modified residue" description="Phosphoserine" evidence="1">
    <location>
        <position position="662"/>
    </location>
</feature>
<feature type="glycosylation site" description="N-linked (GlcNAc...) asparagine" evidence="3">
    <location>
        <position position="64"/>
    </location>
</feature>
<feature type="glycosylation site" description="N-linked (GlcNAc...) asparagine" evidence="3">
    <location>
        <position position="99"/>
    </location>
</feature>
<feature type="glycosylation site" description="N-linked (GlcNAc...) asparagine" evidence="3">
    <location>
        <position position="144"/>
    </location>
</feature>
<feature type="glycosylation site" description="N-linked (GlcNAc...) asparagine" evidence="3">
    <location>
        <position position="163"/>
    </location>
</feature>
<feature type="glycosylation site" description="N-linked (GlcNAc...) asparagine" evidence="3">
    <location>
        <position position="196"/>
    </location>
</feature>
<feature type="glycosylation site" description="N-linked (GlcNAc...) asparagine" evidence="3">
    <location>
        <position position="212"/>
    </location>
</feature>
<feature type="glycosylation site" description="N-linked (GlcNAc...) asparagine" evidence="3">
    <location>
        <position position="233"/>
    </location>
</feature>
<feature type="glycosylation site" description="N-linked (GlcNAc...) asparagine" evidence="3">
    <location>
        <position position="242"/>
    </location>
</feature>
<feature type="sequence conflict" description="In Ref. 4; AAN72248/AAL57701." evidence="6" ref="4">
    <original>D</original>
    <variation>Y</variation>
    <location>
        <position position="361"/>
    </location>
</feature>
<dbReference type="EC" id="2.7.11.1"/>
<dbReference type="EMBL" id="Z99707">
    <property type="protein sequence ID" value="CAB16774.1"/>
    <property type="status" value="ALT_INIT"/>
    <property type="molecule type" value="Genomic_DNA"/>
</dbReference>
<dbReference type="EMBL" id="AL161591">
    <property type="protein sequence ID" value="CAB80391.1"/>
    <property type="status" value="ALT_INIT"/>
    <property type="molecule type" value="Genomic_DNA"/>
</dbReference>
<dbReference type="EMBL" id="CP002687">
    <property type="protein sequence ID" value="AEE86773.1"/>
    <property type="molecule type" value="Genomic_DNA"/>
</dbReference>
<dbReference type="EMBL" id="AY065068">
    <property type="protein sequence ID" value="AAL57701.1"/>
    <property type="molecule type" value="mRNA"/>
</dbReference>
<dbReference type="EMBL" id="BT002237">
    <property type="protein sequence ID" value="AAN72248.1"/>
    <property type="molecule type" value="mRNA"/>
</dbReference>
<dbReference type="EMBL" id="FJ708765">
    <property type="protein sequence ID" value="ACN59358.1"/>
    <property type="molecule type" value="mRNA"/>
</dbReference>
<dbReference type="EMBL" id="AK317633">
    <property type="protein sequence ID" value="BAH20295.1"/>
    <property type="molecule type" value="mRNA"/>
</dbReference>
<dbReference type="PIR" id="B85440">
    <property type="entry name" value="B85440"/>
</dbReference>
<dbReference type="RefSeq" id="NP_195442.2">
    <property type="nucleotide sequence ID" value="NM_119888.3"/>
</dbReference>
<dbReference type="SMR" id="C0LGS3"/>
<dbReference type="BioGRID" id="15160">
    <property type="interactions" value="38"/>
</dbReference>
<dbReference type="FunCoup" id="C0LGS3">
    <property type="interactions" value="252"/>
</dbReference>
<dbReference type="IntAct" id="C0LGS3">
    <property type="interactions" value="43"/>
</dbReference>
<dbReference type="STRING" id="3702.C0LGS3"/>
<dbReference type="GlyGen" id="C0LGS3">
    <property type="glycosylation" value="10 sites"/>
</dbReference>
<dbReference type="iPTMnet" id="C0LGS3"/>
<dbReference type="PaxDb" id="3702-AT4G37250.1"/>
<dbReference type="ProteomicsDB" id="243127"/>
<dbReference type="EnsemblPlants" id="AT4G37250.1">
    <property type="protein sequence ID" value="AT4G37250.1"/>
    <property type="gene ID" value="AT4G37250"/>
</dbReference>
<dbReference type="GeneID" id="829879"/>
<dbReference type="Gramene" id="AT4G37250.1">
    <property type="protein sequence ID" value="AT4G37250.1"/>
    <property type="gene ID" value="AT4G37250"/>
</dbReference>
<dbReference type="KEGG" id="ath:AT4G37250"/>
<dbReference type="Araport" id="AT4G37250"/>
<dbReference type="TAIR" id="AT4G37250"/>
<dbReference type="eggNOG" id="ENOG502QRF8">
    <property type="taxonomic scope" value="Eukaryota"/>
</dbReference>
<dbReference type="HOGENOM" id="CLU_000288_92_6_1"/>
<dbReference type="InParanoid" id="C0LGS3"/>
<dbReference type="OMA" id="GWRVVEF"/>
<dbReference type="PhylomeDB" id="C0LGS3"/>
<dbReference type="PRO" id="PR:C0LGS3"/>
<dbReference type="Proteomes" id="UP000006548">
    <property type="component" value="Chromosome 4"/>
</dbReference>
<dbReference type="ExpressionAtlas" id="C0LGS3">
    <property type="expression patterns" value="baseline and differential"/>
</dbReference>
<dbReference type="GO" id="GO:0016020">
    <property type="term" value="C:membrane"/>
    <property type="evidence" value="ECO:0007669"/>
    <property type="project" value="UniProtKB-SubCell"/>
</dbReference>
<dbReference type="GO" id="GO:0005524">
    <property type="term" value="F:ATP binding"/>
    <property type="evidence" value="ECO:0007669"/>
    <property type="project" value="UniProtKB-KW"/>
</dbReference>
<dbReference type="GO" id="GO:0106310">
    <property type="term" value="F:protein serine kinase activity"/>
    <property type="evidence" value="ECO:0007669"/>
    <property type="project" value="RHEA"/>
</dbReference>
<dbReference type="GO" id="GO:0004674">
    <property type="term" value="F:protein serine/threonine kinase activity"/>
    <property type="evidence" value="ECO:0007669"/>
    <property type="project" value="UniProtKB-KW"/>
</dbReference>
<dbReference type="FunFam" id="3.80.10.10:FF:000722">
    <property type="entry name" value="Leucine-rich repeat receptor-like protein kinase"/>
    <property type="match status" value="1"/>
</dbReference>
<dbReference type="FunFam" id="3.80.10.10:FF:000101">
    <property type="entry name" value="LRR receptor-like serine/threonine-protein kinase ERECTA"/>
    <property type="match status" value="1"/>
</dbReference>
<dbReference type="FunFam" id="1.10.510.10:FF:001023">
    <property type="entry name" value="Os07g0541700 protein"/>
    <property type="match status" value="1"/>
</dbReference>
<dbReference type="Gene3D" id="3.30.200.20">
    <property type="entry name" value="Phosphorylase Kinase, domain 1"/>
    <property type="match status" value="1"/>
</dbReference>
<dbReference type="Gene3D" id="3.80.10.10">
    <property type="entry name" value="Ribonuclease Inhibitor"/>
    <property type="match status" value="2"/>
</dbReference>
<dbReference type="Gene3D" id="1.10.510.10">
    <property type="entry name" value="Transferase(Phosphotransferase) domain 1"/>
    <property type="match status" value="1"/>
</dbReference>
<dbReference type="InterPro" id="IPR011009">
    <property type="entry name" value="Kinase-like_dom_sf"/>
</dbReference>
<dbReference type="InterPro" id="IPR001611">
    <property type="entry name" value="Leu-rich_rpt"/>
</dbReference>
<dbReference type="InterPro" id="IPR032675">
    <property type="entry name" value="LRR_dom_sf"/>
</dbReference>
<dbReference type="InterPro" id="IPR013210">
    <property type="entry name" value="LRR_N_plant-typ"/>
</dbReference>
<dbReference type="InterPro" id="IPR046959">
    <property type="entry name" value="PRK1-6/SRF4-like"/>
</dbReference>
<dbReference type="InterPro" id="IPR000719">
    <property type="entry name" value="Prot_kinase_dom"/>
</dbReference>
<dbReference type="PANTHER" id="PTHR48007">
    <property type="entry name" value="LEUCINE-RICH REPEAT RECEPTOR-LIKE PROTEIN KINASE PXC1"/>
    <property type="match status" value="1"/>
</dbReference>
<dbReference type="PANTHER" id="PTHR48007:SF47">
    <property type="entry name" value="PROTEIN KINASE DOMAIN-CONTAINING PROTEIN"/>
    <property type="match status" value="1"/>
</dbReference>
<dbReference type="Pfam" id="PF00560">
    <property type="entry name" value="LRR_1"/>
    <property type="match status" value="5"/>
</dbReference>
<dbReference type="Pfam" id="PF08263">
    <property type="entry name" value="LRRNT_2"/>
    <property type="match status" value="1"/>
</dbReference>
<dbReference type="Pfam" id="PF00069">
    <property type="entry name" value="Pkinase"/>
    <property type="match status" value="1"/>
</dbReference>
<dbReference type="SUPFAM" id="SSF52058">
    <property type="entry name" value="L domain-like"/>
    <property type="match status" value="1"/>
</dbReference>
<dbReference type="SUPFAM" id="SSF56112">
    <property type="entry name" value="Protein kinase-like (PK-like)"/>
    <property type="match status" value="1"/>
</dbReference>
<dbReference type="PROSITE" id="PS50011">
    <property type="entry name" value="PROTEIN_KINASE_DOM"/>
    <property type="match status" value="1"/>
</dbReference>
<keyword id="KW-0067">ATP-binding</keyword>
<keyword id="KW-0325">Glycoprotein</keyword>
<keyword id="KW-0418">Kinase</keyword>
<keyword id="KW-0433">Leucine-rich repeat</keyword>
<keyword id="KW-0472">Membrane</keyword>
<keyword id="KW-0547">Nucleotide-binding</keyword>
<keyword id="KW-0597">Phosphoprotein</keyword>
<keyword id="KW-0675">Receptor</keyword>
<keyword id="KW-1185">Reference proteome</keyword>
<keyword id="KW-0677">Repeat</keyword>
<keyword id="KW-0723">Serine/threonine-protein kinase</keyword>
<keyword id="KW-0732">Signal</keyword>
<keyword id="KW-0808">Transferase</keyword>
<keyword id="KW-0812">Transmembrane</keyword>
<keyword id="KW-1133">Transmembrane helix</keyword>